<comment type="function">
    <text evidence="1">Core subunit of the mitochondrial membrane respiratory chain NADH dehydrogenase (Complex I) that is believed to belong to the minimal assembly required for catalysis. Complex I functions in the transfer of electrons from NADH to the respiratory chain. The immediate electron acceptor for the enzyme is believed to be ubiquinone (By similarity).</text>
</comment>
<comment type="catalytic activity">
    <reaction>
        <text>a ubiquinone + NADH + 5 H(+)(in) = a ubiquinol + NAD(+) + 4 H(+)(out)</text>
        <dbReference type="Rhea" id="RHEA:29091"/>
        <dbReference type="Rhea" id="RHEA-COMP:9565"/>
        <dbReference type="Rhea" id="RHEA-COMP:9566"/>
        <dbReference type="ChEBI" id="CHEBI:15378"/>
        <dbReference type="ChEBI" id="CHEBI:16389"/>
        <dbReference type="ChEBI" id="CHEBI:17976"/>
        <dbReference type="ChEBI" id="CHEBI:57540"/>
        <dbReference type="ChEBI" id="CHEBI:57945"/>
        <dbReference type="EC" id="7.1.1.2"/>
    </reaction>
</comment>
<comment type="subcellular location">
    <subcellularLocation>
        <location evidence="1">Mitochondrion inner membrane</location>
        <topology evidence="1">Multi-pass membrane protein</topology>
    </subcellularLocation>
</comment>
<comment type="similarity">
    <text evidence="3">Belongs to the complex I subunit 1 family.</text>
</comment>
<protein>
    <recommendedName>
        <fullName>NADH-ubiquinone oxidoreductase chain 1</fullName>
        <ecNumber>7.1.1.2</ecNumber>
    </recommendedName>
    <alternativeName>
        <fullName>NADH dehydrogenase subunit 1</fullName>
    </alternativeName>
</protein>
<reference key="1">
    <citation type="journal article" date="2002" name="J. Mol. Evol.">
        <title>Intra- and interfamily relationships of Vespertilionidae inferred by various molecular markers including SINE insertion data.</title>
        <authorList>
            <person name="Kawai K."/>
            <person name="Nikaido M."/>
            <person name="Harada M."/>
            <person name="Matsumura S."/>
            <person name="Lin L.K."/>
            <person name="Wu Y."/>
            <person name="Hasegawa M."/>
            <person name="Okada N."/>
        </authorList>
    </citation>
    <scope>NUCLEOTIDE SEQUENCE [GENOMIC DNA]</scope>
</reference>
<geneLocation type="mitochondrion"/>
<accession>Q8M894</accession>
<evidence type="ECO:0000250" key="1"/>
<evidence type="ECO:0000255" key="2"/>
<evidence type="ECO:0000305" key="3"/>
<proteinExistence type="inferred from homology"/>
<dbReference type="EC" id="7.1.1.2"/>
<dbReference type="EMBL" id="AB079807">
    <property type="protein sequence ID" value="BAB92032.1"/>
    <property type="molecule type" value="Genomic_DNA"/>
</dbReference>
<dbReference type="SMR" id="Q8M894"/>
<dbReference type="GO" id="GO:0005743">
    <property type="term" value="C:mitochondrial inner membrane"/>
    <property type="evidence" value="ECO:0007669"/>
    <property type="project" value="UniProtKB-SubCell"/>
</dbReference>
<dbReference type="GO" id="GO:0008137">
    <property type="term" value="F:NADH dehydrogenase (ubiquinone) activity"/>
    <property type="evidence" value="ECO:0007669"/>
    <property type="project" value="UniProtKB-EC"/>
</dbReference>
<dbReference type="GO" id="GO:0009060">
    <property type="term" value="P:aerobic respiration"/>
    <property type="evidence" value="ECO:0007669"/>
    <property type="project" value="TreeGrafter"/>
</dbReference>
<dbReference type="HAMAP" id="MF_01350">
    <property type="entry name" value="NDH1_NuoH"/>
    <property type="match status" value="1"/>
</dbReference>
<dbReference type="InterPro" id="IPR001694">
    <property type="entry name" value="NADH_UbQ_OxRdtase_su1/FPO"/>
</dbReference>
<dbReference type="InterPro" id="IPR018086">
    <property type="entry name" value="NADH_UbQ_OxRdtase_su1_CS"/>
</dbReference>
<dbReference type="PANTHER" id="PTHR11432">
    <property type="entry name" value="NADH DEHYDROGENASE SUBUNIT 1"/>
    <property type="match status" value="1"/>
</dbReference>
<dbReference type="PANTHER" id="PTHR11432:SF3">
    <property type="entry name" value="NADH-UBIQUINONE OXIDOREDUCTASE CHAIN 1"/>
    <property type="match status" value="1"/>
</dbReference>
<dbReference type="Pfam" id="PF00146">
    <property type="entry name" value="NADHdh"/>
    <property type="match status" value="1"/>
</dbReference>
<dbReference type="PROSITE" id="PS00667">
    <property type="entry name" value="COMPLEX1_ND1_1"/>
    <property type="match status" value="1"/>
</dbReference>
<dbReference type="PROSITE" id="PS00668">
    <property type="entry name" value="COMPLEX1_ND1_2"/>
    <property type="match status" value="1"/>
</dbReference>
<gene>
    <name type="primary">MT-ND1</name>
    <name type="synonym">MTND1</name>
    <name type="synonym">NADH1</name>
    <name type="synonym">ND1</name>
</gene>
<name>NU1M_TAPME</name>
<feature type="chain" id="PRO_0000117487" description="NADH-ubiquinone oxidoreductase chain 1">
    <location>
        <begin position="1"/>
        <end position="318"/>
    </location>
</feature>
<feature type="transmembrane region" description="Helical" evidence="2">
    <location>
        <begin position="2"/>
        <end position="22"/>
    </location>
</feature>
<feature type="transmembrane region" description="Helical" evidence="2">
    <location>
        <begin position="70"/>
        <end position="90"/>
    </location>
</feature>
<feature type="transmembrane region" description="Helical" evidence="2">
    <location>
        <begin position="100"/>
        <end position="120"/>
    </location>
</feature>
<feature type="transmembrane region" description="Helical" evidence="2">
    <location>
        <begin position="147"/>
        <end position="167"/>
    </location>
</feature>
<feature type="transmembrane region" description="Helical" evidence="2">
    <location>
        <begin position="171"/>
        <end position="191"/>
    </location>
</feature>
<feature type="transmembrane region" description="Helical" evidence="2">
    <location>
        <begin position="217"/>
        <end position="237"/>
    </location>
</feature>
<feature type="transmembrane region" description="Helical" evidence="2">
    <location>
        <begin position="253"/>
        <end position="273"/>
    </location>
</feature>
<feature type="transmembrane region" description="Helical" evidence="2">
    <location>
        <begin position="294"/>
        <end position="314"/>
    </location>
</feature>
<organism>
    <name type="scientific">Taphozous melanopogon</name>
    <name type="common">Black-bearded tomb bat</name>
    <dbReference type="NCBI Taxonomy" id="187003"/>
    <lineage>
        <taxon>Eukaryota</taxon>
        <taxon>Metazoa</taxon>
        <taxon>Chordata</taxon>
        <taxon>Craniata</taxon>
        <taxon>Vertebrata</taxon>
        <taxon>Euteleostomi</taxon>
        <taxon>Mammalia</taxon>
        <taxon>Eutheria</taxon>
        <taxon>Laurasiatheria</taxon>
        <taxon>Chiroptera</taxon>
        <taxon>Yangochiroptera</taxon>
        <taxon>Emballonuridae</taxon>
        <taxon>Taphozoinae</taxon>
        <taxon>Taphozous</taxon>
    </lineage>
</organism>
<keyword id="KW-0249">Electron transport</keyword>
<keyword id="KW-0472">Membrane</keyword>
<keyword id="KW-0496">Mitochondrion</keyword>
<keyword id="KW-0999">Mitochondrion inner membrane</keyword>
<keyword id="KW-0520">NAD</keyword>
<keyword id="KW-0679">Respiratory chain</keyword>
<keyword id="KW-1278">Translocase</keyword>
<keyword id="KW-0812">Transmembrane</keyword>
<keyword id="KW-1133">Transmembrane helix</keyword>
<keyword id="KW-0813">Transport</keyword>
<keyword id="KW-0830">Ubiquinone</keyword>
<sequence length="318" mass="35698">MFLINLLLMIVPILLAVAFLTLLERKVLGYMQLRKGPNIVGPYGLLQPIADAVKLFTKEPLWPLTSSATMFIIAPILALSLALTMWIPLPMPYPLINMNLGVLFMLAMSSLAVYAILWSGWASNSKYALIGALRAVAQTISYEVTLAIILLSVLLLNGSFTLPTLIITQEHLWLIVPSWPLTMMWFISTLAETNRAPFDLTEGESELVSGFNVEYAAGPFAMFFLAEYANIIMMNIFTTTLFLGAYHNPIMPELYSVNFTLKATALTIMFLWVRASYPRFRYDQLMHLLWKNFLPLTLALCMWHVALPILTAGIPPQT</sequence>